<sequence length="67" mass="7376">MWRIWRLFDPMRAMVAQAVFLLGLAVLIHLMLLGTNKYNWLDGAKKAPVATAVAPVPAEVTSLAQAK</sequence>
<organism>
    <name type="scientific">Rubrivivax gelatinosus (strain NBRC 100245 / IL144)</name>
    <dbReference type="NCBI Taxonomy" id="983917"/>
    <lineage>
        <taxon>Bacteria</taxon>
        <taxon>Pseudomonadati</taxon>
        <taxon>Pseudomonadota</taxon>
        <taxon>Betaproteobacteria</taxon>
        <taxon>Burkholderiales</taxon>
        <taxon>Sphaerotilaceae</taxon>
        <taxon>Rubrivivax</taxon>
    </lineage>
</organism>
<proteinExistence type="inferred from homology"/>
<name>LHA1_RUBGI</name>
<evidence type="ECO:0000250" key="1"/>
<evidence type="ECO:0000255" key="2"/>
<evidence type="ECO:0000305" key="3"/>
<accession>I0HUL6</accession>
<accession>P51756</accession>
<accession>P95615</accession>
<comment type="function">
    <text>Antenna complexes are light-harvesting systems, which transfer the excitation energy to the reaction centers.</text>
</comment>
<comment type="subunit">
    <text evidence="1">An alpha/beta heterodimer. The core complex is formed by different alpha and beta chains, binding bacteriochlorophyll molecules, and arranged most probably in tetrameric structures disposed around the reaction center. The non-pigmented gamma chains may constitute additional components (By similarity).</text>
</comment>
<comment type="subcellular location">
    <subcellularLocation>
        <location>Cell inner membrane</location>
        <topology>Single-pass type II membrane protein</topology>
    </subcellularLocation>
</comment>
<comment type="similarity">
    <text evidence="3">Belongs to the antenna complex alpha subunit family.</text>
</comment>
<feature type="chain" id="PRO_0000418666" description="Light-harvesting protein B-870 alpha chain">
    <location>
        <begin position="1"/>
        <end position="67"/>
    </location>
</feature>
<feature type="topological domain" description="Cytoplasmic" evidence="2">
    <location>
        <begin position="1"/>
        <end position="12"/>
    </location>
</feature>
<feature type="transmembrane region" description="Helical" evidence="2">
    <location>
        <begin position="13"/>
        <end position="33"/>
    </location>
</feature>
<feature type="topological domain" description="Periplasmic" evidence="2">
    <location>
        <begin position="34"/>
        <end position="67"/>
    </location>
</feature>
<feature type="binding site" description="axial binding residue" evidence="2">
    <location>
        <position position="29"/>
    </location>
    <ligand>
        <name>a bacteriochlorophyll</name>
        <dbReference type="ChEBI" id="CHEBI:38201"/>
    </ligand>
    <ligandPart>
        <name>Mg</name>
        <dbReference type="ChEBI" id="CHEBI:25107"/>
    </ligandPart>
</feature>
<gene>
    <name type="primary">pufA</name>
    <name type="ordered locus">RGE_33640</name>
</gene>
<protein>
    <recommendedName>
        <fullName>Light-harvesting protein B-870 alpha chain</fullName>
    </recommendedName>
    <alternativeName>
        <fullName>Antenna pigment protein alpha chain</fullName>
    </alternativeName>
    <alternativeName>
        <fullName>Light-harvesting protein B-875 alpha chain</fullName>
    </alternativeName>
</protein>
<dbReference type="EMBL" id="D16822">
    <property type="protein sequence ID" value="BAA04099.1"/>
    <property type="molecule type" value="Genomic_DNA"/>
</dbReference>
<dbReference type="EMBL" id="AP012320">
    <property type="protein sequence ID" value="BAL96703.1"/>
    <property type="molecule type" value="Genomic_DNA"/>
</dbReference>
<dbReference type="PIR" id="D49964">
    <property type="entry name" value="D49964"/>
</dbReference>
<dbReference type="PIR" id="T50888">
    <property type="entry name" value="T50888"/>
</dbReference>
<dbReference type="RefSeq" id="WP_014429564.1">
    <property type="nucleotide sequence ID" value="NC_017075.1"/>
</dbReference>
<dbReference type="SMR" id="I0HUL6"/>
<dbReference type="STRING" id="983917.RGE_33640"/>
<dbReference type="KEGG" id="rge:RGE_33640"/>
<dbReference type="PATRIC" id="fig|983917.3.peg.3291"/>
<dbReference type="eggNOG" id="ENOG50302TE">
    <property type="taxonomic scope" value="Bacteria"/>
</dbReference>
<dbReference type="HOGENOM" id="CLU_205201_0_0_4"/>
<dbReference type="Proteomes" id="UP000007883">
    <property type="component" value="Chromosome"/>
</dbReference>
<dbReference type="GO" id="GO:0019866">
    <property type="term" value="C:organelle inner membrane"/>
    <property type="evidence" value="ECO:0007669"/>
    <property type="project" value="InterPro"/>
</dbReference>
<dbReference type="GO" id="GO:0005886">
    <property type="term" value="C:plasma membrane"/>
    <property type="evidence" value="ECO:0007669"/>
    <property type="project" value="UniProtKB-SubCell"/>
</dbReference>
<dbReference type="GO" id="GO:0030077">
    <property type="term" value="C:plasma membrane light-harvesting complex"/>
    <property type="evidence" value="ECO:0007669"/>
    <property type="project" value="InterPro"/>
</dbReference>
<dbReference type="GO" id="GO:0042314">
    <property type="term" value="F:bacteriochlorophyll binding"/>
    <property type="evidence" value="ECO:0007669"/>
    <property type="project" value="UniProtKB-KW"/>
</dbReference>
<dbReference type="GO" id="GO:0045156">
    <property type="term" value="F:electron transporter, transferring electrons within the cyclic electron transport pathway of photosynthesis activity"/>
    <property type="evidence" value="ECO:0007669"/>
    <property type="project" value="InterPro"/>
</dbReference>
<dbReference type="GO" id="GO:0046872">
    <property type="term" value="F:metal ion binding"/>
    <property type="evidence" value="ECO:0007669"/>
    <property type="project" value="UniProtKB-KW"/>
</dbReference>
<dbReference type="GO" id="GO:0019684">
    <property type="term" value="P:photosynthesis, light reaction"/>
    <property type="evidence" value="ECO:0007669"/>
    <property type="project" value="InterPro"/>
</dbReference>
<dbReference type="Gene3D" id="4.10.220.20">
    <property type="entry name" value="Light-harvesting complex"/>
    <property type="match status" value="1"/>
</dbReference>
<dbReference type="InterPro" id="IPR000066">
    <property type="entry name" value="Antenna_a/b"/>
</dbReference>
<dbReference type="InterPro" id="IPR018332">
    <property type="entry name" value="Antenna_alpha"/>
</dbReference>
<dbReference type="InterPro" id="IPR002361">
    <property type="entry name" value="Antenna_alpha_CS"/>
</dbReference>
<dbReference type="InterPro" id="IPR035889">
    <property type="entry name" value="Light-harvesting_complex"/>
</dbReference>
<dbReference type="NCBIfam" id="NF040861">
    <property type="entry name" value="pufA_517_ASD"/>
    <property type="match status" value="1"/>
</dbReference>
<dbReference type="Pfam" id="PF00556">
    <property type="entry name" value="LHC"/>
    <property type="match status" value="1"/>
</dbReference>
<dbReference type="PRINTS" id="PR00673">
    <property type="entry name" value="LIGHTHARVSTA"/>
</dbReference>
<dbReference type="SUPFAM" id="SSF56918">
    <property type="entry name" value="Light-harvesting complex subunits"/>
    <property type="match status" value="1"/>
</dbReference>
<dbReference type="PROSITE" id="PS00968">
    <property type="entry name" value="ANTENNA_COMP_ALPHA"/>
    <property type="match status" value="1"/>
</dbReference>
<reference key="1">
    <citation type="journal article" date="1994" name="J. Biol. Chem.">
        <title>Primary structure and transcription of genes encoding B870 and photosynthetic reaction center apoproteins from Rubrivivax gelatinosus.</title>
        <authorList>
            <person name="Nagashima K.V.P."/>
            <person name="Matsuura K."/>
            <person name="Ohyama S."/>
            <person name="Shimada K."/>
        </authorList>
    </citation>
    <scope>NUCLEOTIDE SEQUENCE [GENOMIC DNA]</scope>
    <source>
        <strain>NBRC 100245 / IL144</strain>
    </source>
</reference>
<reference key="2">
    <citation type="journal article" date="2012" name="J. Bacteriol.">
        <title>Complete genome sequence of phototrophic betaproteobacterium Rubrivivax gelatinosus IL144.</title>
        <authorList>
            <person name="Nagashima S."/>
            <person name="Kamimura A."/>
            <person name="Shimizu T."/>
            <person name="Nakamura-Isaki S."/>
            <person name="Aono E."/>
            <person name="Sakamoto K."/>
            <person name="Ichikawa N."/>
            <person name="Nakazawa H."/>
            <person name="Sekine M."/>
            <person name="Yamazaki S."/>
            <person name="Fujita N."/>
            <person name="Shimada K."/>
            <person name="Hanada S."/>
            <person name="Nagashima K.V."/>
        </authorList>
    </citation>
    <scope>NUCLEOTIDE SEQUENCE [LARGE SCALE GENOMIC DNA]</scope>
    <source>
        <strain>NBRC 100245 / IL144</strain>
    </source>
</reference>
<keyword id="KW-0042">Antenna complex</keyword>
<keyword id="KW-0076">Bacteriochlorophyll</keyword>
<keyword id="KW-0997">Cell inner membrane</keyword>
<keyword id="KW-1003">Cell membrane</keyword>
<keyword id="KW-0148">Chlorophyll</keyword>
<keyword id="KW-0157">Chromophore</keyword>
<keyword id="KW-0437">Light-harvesting polypeptide</keyword>
<keyword id="KW-0460">Magnesium</keyword>
<keyword id="KW-0472">Membrane</keyword>
<keyword id="KW-0479">Metal-binding</keyword>
<keyword id="KW-1185">Reference proteome</keyword>
<keyword id="KW-0812">Transmembrane</keyword>
<keyword id="KW-1133">Transmembrane helix</keyword>